<proteinExistence type="inferred from homology"/>
<protein>
    <recommendedName>
        <fullName evidence="1">Transcription termination/antitermination protein NusG</fullName>
    </recommendedName>
</protein>
<feature type="chain" id="PRO_0000113972" description="Transcription termination/antitermination protein NusG">
    <location>
        <begin position="1"/>
        <end position="185"/>
    </location>
</feature>
<feature type="domain" description="KOW" evidence="1">
    <location>
        <begin position="134"/>
        <end position="162"/>
    </location>
</feature>
<organism>
    <name type="scientific">Xylella fastidiosa (strain Temecula1 / ATCC 700964)</name>
    <dbReference type="NCBI Taxonomy" id="183190"/>
    <lineage>
        <taxon>Bacteria</taxon>
        <taxon>Pseudomonadati</taxon>
        <taxon>Pseudomonadota</taxon>
        <taxon>Gammaproteobacteria</taxon>
        <taxon>Lysobacterales</taxon>
        <taxon>Lysobacteraceae</taxon>
        <taxon>Xylella</taxon>
    </lineage>
</organism>
<reference key="1">
    <citation type="journal article" date="2003" name="J. Bacteriol.">
        <title>Comparative analyses of the complete genome sequences of Pierce's disease and citrus variegated chlorosis strains of Xylella fastidiosa.</title>
        <authorList>
            <person name="Van Sluys M.A."/>
            <person name="de Oliveira M.C."/>
            <person name="Monteiro-Vitorello C.B."/>
            <person name="Miyaki C.Y."/>
            <person name="Furlan L.R."/>
            <person name="Camargo L.E.A."/>
            <person name="da Silva A.C.R."/>
            <person name="Moon D.H."/>
            <person name="Takita M.A."/>
            <person name="Lemos E.G.M."/>
            <person name="Machado M.A."/>
            <person name="Ferro M.I.T."/>
            <person name="da Silva F.R."/>
            <person name="Goldman M.H.S."/>
            <person name="Goldman G.H."/>
            <person name="Lemos M.V.F."/>
            <person name="El-Dorry H."/>
            <person name="Tsai S.M."/>
            <person name="Carrer H."/>
            <person name="Carraro D.M."/>
            <person name="de Oliveira R.C."/>
            <person name="Nunes L.R."/>
            <person name="Siqueira W.J."/>
            <person name="Coutinho L.L."/>
            <person name="Kimura E.T."/>
            <person name="Ferro E.S."/>
            <person name="Harakava R."/>
            <person name="Kuramae E.E."/>
            <person name="Marino C.L."/>
            <person name="Giglioti E."/>
            <person name="Abreu I.L."/>
            <person name="Alves L.M.C."/>
            <person name="do Amaral A.M."/>
            <person name="Baia G.S."/>
            <person name="Blanco S.R."/>
            <person name="Brito M.S."/>
            <person name="Cannavan F.S."/>
            <person name="Celestino A.V."/>
            <person name="da Cunha A.F."/>
            <person name="Fenille R.C."/>
            <person name="Ferro J.A."/>
            <person name="Formighieri E.F."/>
            <person name="Kishi L.T."/>
            <person name="Leoni S.G."/>
            <person name="Oliveira A.R."/>
            <person name="Rosa V.E. Jr."/>
            <person name="Sassaki F.T."/>
            <person name="Sena J.A.D."/>
            <person name="de Souza A.A."/>
            <person name="Truffi D."/>
            <person name="Tsukumo F."/>
            <person name="Yanai G.M."/>
            <person name="Zaros L.G."/>
            <person name="Civerolo E.L."/>
            <person name="Simpson A.J.G."/>
            <person name="Almeida N.F. Jr."/>
            <person name="Setubal J.C."/>
            <person name="Kitajima J.P."/>
        </authorList>
    </citation>
    <scope>NUCLEOTIDE SEQUENCE [LARGE SCALE GENOMIC DNA]</scope>
    <source>
        <strain>Temecula1 / ATCC 700964</strain>
    </source>
</reference>
<name>NUSG_XYLFT</name>
<accession>Q87A27</accession>
<gene>
    <name evidence="1" type="primary">nusG</name>
    <name type="ordered locus">PD_2006</name>
</gene>
<keyword id="KW-1185">Reference proteome</keyword>
<keyword id="KW-0804">Transcription</keyword>
<keyword id="KW-0889">Transcription antitermination</keyword>
<keyword id="KW-0805">Transcription regulation</keyword>
<keyword id="KW-0806">Transcription termination</keyword>
<comment type="function">
    <text evidence="1">Participates in transcription elongation, termination and antitermination.</text>
</comment>
<comment type="similarity">
    <text evidence="1">Belongs to the NusG family.</text>
</comment>
<evidence type="ECO:0000255" key="1">
    <source>
        <dbReference type="HAMAP-Rule" id="MF_00948"/>
    </source>
</evidence>
<dbReference type="EMBL" id="AE009442">
    <property type="protein sequence ID" value="AAO29835.1"/>
    <property type="molecule type" value="Genomic_DNA"/>
</dbReference>
<dbReference type="RefSeq" id="WP_004090734.1">
    <property type="nucleotide sequence ID" value="NC_004556.1"/>
</dbReference>
<dbReference type="SMR" id="Q87A27"/>
<dbReference type="GeneID" id="93905867"/>
<dbReference type="KEGG" id="xft:PD_2006"/>
<dbReference type="HOGENOM" id="CLU_067287_1_0_6"/>
<dbReference type="Proteomes" id="UP000002516">
    <property type="component" value="Chromosome"/>
</dbReference>
<dbReference type="GO" id="GO:0005829">
    <property type="term" value="C:cytosol"/>
    <property type="evidence" value="ECO:0007669"/>
    <property type="project" value="TreeGrafter"/>
</dbReference>
<dbReference type="GO" id="GO:0006353">
    <property type="term" value="P:DNA-templated transcription termination"/>
    <property type="evidence" value="ECO:0007669"/>
    <property type="project" value="UniProtKB-UniRule"/>
</dbReference>
<dbReference type="GO" id="GO:0032784">
    <property type="term" value="P:regulation of DNA-templated transcription elongation"/>
    <property type="evidence" value="ECO:0007669"/>
    <property type="project" value="InterPro"/>
</dbReference>
<dbReference type="GO" id="GO:0031564">
    <property type="term" value="P:transcription antitermination"/>
    <property type="evidence" value="ECO:0007669"/>
    <property type="project" value="UniProtKB-UniRule"/>
</dbReference>
<dbReference type="GO" id="GO:0140673">
    <property type="term" value="P:transcription elongation-coupled chromatin remodeling"/>
    <property type="evidence" value="ECO:0007669"/>
    <property type="project" value="InterPro"/>
</dbReference>
<dbReference type="CDD" id="cd06091">
    <property type="entry name" value="KOW_NusG"/>
    <property type="match status" value="1"/>
</dbReference>
<dbReference type="CDD" id="cd09891">
    <property type="entry name" value="NGN_Bact_1"/>
    <property type="match status" value="1"/>
</dbReference>
<dbReference type="FunFam" id="2.30.30.30:FF:000002">
    <property type="entry name" value="Transcription termination/antitermination factor NusG"/>
    <property type="match status" value="1"/>
</dbReference>
<dbReference type="FunFam" id="3.30.70.940:FF:000001">
    <property type="entry name" value="Transcription termination/antitermination protein NusG"/>
    <property type="match status" value="1"/>
</dbReference>
<dbReference type="Gene3D" id="2.30.30.30">
    <property type="match status" value="1"/>
</dbReference>
<dbReference type="Gene3D" id="3.30.70.940">
    <property type="entry name" value="NusG, N-terminal domain"/>
    <property type="match status" value="1"/>
</dbReference>
<dbReference type="HAMAP" id="MF_00948">
    <property type="entry name" value="NusG"/>
    <property type="match status" value="1"/>
</dbReference>
<dbReference type="InterPro" id="IPR005824">
    <property type="entry name" value="KOW"/>
</dbReference>
<dbReference type="InterPro" id="IPR047050">
    <property type="entry name" value="NGN"/>
</dbReference>
<dbReference type="InterPro" id="IPR006645">
    <property type="entry name" value="NGN-like_dom"/>
</dbReference>
<dbReference type="InterPro" id="IPR036735">
    <property type="entry name" value="NGN_dom_sf"/>
</dbReference>
<dbReference type="InterPro" id="IPR043425">
    <property type="entry name" value="NusG-like"/>
</dbReference>
<dbReference type="InterPro" id="IPR014722">
    <property type="entry name" value="Rib_uL2_dom2"/>
</dbReference>
<dbReference type="InterPro" id="IPR001062">
    <property type="entry name" value="Transcrpt_antiterm_NusG"/>
</dbReference>
<dbReference type="InterPro" id="IPR015869">
    <property type="entry name" value="Transcrpt_antiterm_NusG_bac_CS"/>
</dbReference>
<dbReference type="InterPro" id="IPR008991">
    <property type="entry name" value="Translation_prot_SH3-like_sf"/>
</dbReference>
<dbReference type="NCBIfam" id="TIGR00922">
    <property type="entry name" value="nusG"/>
    <property type="match status" value="1"/>
</dbReference>
<dbReference type="PANTHER" id="PTHR30265">
    <property type="entry name" value="RHO-INTERACTING TRANSCRIPTION TERMINATION FACTOR NUSG"/>
    <property type="match status" value="1"/>
</dbReference>
<dbReference type="PANTHER" id="PTHR30265:SF2">
    <property type="entry name" value="TRANSCRIPTION TERMINATION_ANTITERMINATION PROTEIN NUSG"/>
    <property type="match status" value="1"/>
</dbReference>
<dbReference type="Pfam" id="PF00467">
    <property type="entry name" value="KOW"/>
    <property type="match status" value="1"/>
</dbReference>
<dbReference type="Pfam" id="PF02357">
    <property type="entry name" value="NusG"/>
    <property type="match status" value="1"/>
</dbReference>
<dbReference type="PRINTS" id="PR00338">
    <property type="entry name" value="NUSGTNSCPFCT"/>
</dbReference>
<dbReference type="SMART" id="SM00739">
    <property type="entry name" value="KOW"/>
    <property type="match status" value="1"/>
</dbReference>
<dbReference type="SMART" id="SM00738">
    <property type="entry name" value="NGN"/>
    <property type="match status" value="1"/>
</dbReference>
<dbReference type="SUPFAM" id="SSF82679">
    <property type="entry name" value="N-utilization substance G protein NusG, N-terminal domain"/>
    <property type="match status" value="1"/>
</dbReference>
<dbReference type="SUPFAM" id="SSF50104">
    <property type="entry name" value="Translation proteins SH3-like domain"/>
    <property type="match status" value="1"/>
</dbReference>
<dbReference type="PROSITE" id="PS01014">
    <property type="entry name" value="NUSG"/>
    <property type="match status" value="1"/>
</dbReference>
<sequence>MKRWYVVHAYSGFEKSVAQALRDRISRIEIQDRFGDVLVPAEEVVEMRSGQKRRSEHKFFPGYVLIQIETYYEGGVPRIDNECWHLVKETPKVMGFIGGTADRPLPISSDEADVILRRVQDGAEKPRPKVLFEPGQMVRVIDGPFNDFDGLVEEVNYEKNRLRVAVLIFGRPTPVDLDFGQVQKS</sequence>